<gene>
    <name evidence="1" type="primary">gpsA</name>
    <name type="ordered locus">MGAS2096_Spy0206</name>
</gene>
<name>GPDA_STRPB</name>
<proteinExistence type="inferred from homology"/>
<comment type="function">
    <text evidence="1">Catalyzes the reduction of the glycolytic intermediate dihydroxyacetone phosphate (DHAP) to sn-glycerol 3-phosphate (G3P), the key precursor for phospholipid synthesis.</text>
</comment>
<comment type="catalytic activity">
    <reaction evidence="1">
        <text>sn-glycerol 3-phosphate + NAD(+) = dihydroxyacetone phosphate + NADH + H(+)</text>
        <dbReference type="Rhea" id="RHEA:11092"/>
        <dbReference type="ChEBI" id="CHEBI:15378"/>
        <dbReference type="ChEBI" id="CHEBI:57540"/>
        <dbReference type="ChEBI" id="CHEBI:57597"/>
        <dbReference type="ChEBI" id="CHEBI:57642"/>
        <dbReference type="ChEBI" id="CHEBI:57945"/>
        <dbReference type="EC" id="1.1.1.94"/>
    </reaction>
    <physiologicalReaction direction="right-to-left" evidence="1">
        <dbReference type="Rhea" id="RHEA:11094"/>
    </physiologicalReaction>
</comment>
<comment type="catalytic activity">
    <reaction evidence="1">
        <text>sn-glycerol 3-phosphate + NADP(+) = dihydroxyacetone phosphate + NADPH + H(+)</text>
        <dbReference type="Rhea" id="RHEA:11096"/>
        <dbReference type="ChEBI" id="CHEBI:15378"/>
        <dbReference type="ChEBI" id="CHEBI:57597"/>
        <dbReference type="ChEBI" id="CHEBI:57642"/>
        <dbReference type="ChEBI" id="CHEBI:57783"/>
        <dbReference type="ChEBI" id="CHEBI:58349"/>
        <dbReference type="EC" id="1.1.1.94"/>
    </reaction>
    <physiologicalReaction direction="right-to-left" evidence="1">
        <dbReference type="Rhea" id="RHEA:11098"/>
    </physiologicalReaction>
</comment>
<comment type="pathway">
    <text evidence="1">Membrane lipid metabolism; glycerophospholipid metabolism.</text>
</comment>
<comment type="subcellular location">
    <subcellularLocation>
        <location evidence="1">Cytoplasm</location>
    </subcellularLocation>
</comment>
<comment type="similarity">
    <text evidence="1">Belongs to the NAD-dependent glycerol-3-phosphate dehydrogenase family.</text>
</comment>
<feature type="chain" id="PRO_0000255380" description="Glycerol-3-phosphate dehydrogenase [NAD(P)+]">
    <location>
        <begin position="1"/>
        <end position="338"/>
    </location>
</feature>
<feature type="active site" description="Proton acceptor" evidence="1">
    <location>
        <position position="194"/>
    </location>
</feature>
<feature type="binding site" evidence="1">
    <location>
        <position position="13"/>
    </location>
    <ligand>
        <name>NADPH</name>
        <dbReference type="ChEBI" id="CHEBI:57783"/>
    </ligand>
</feature>
<feature type="binding site" evidence="1">
    <location>
        <position position="14"/>
    </location>
    <ligand>
        <name>NADPH</name>
        <dbReference type="ChEBI" id="CHEBI:57783"/>
    </ligand>
</feature>
<feature type="binding site" evidence="1">
    <location>
        <position position="108"/>
    </location>
    <ligand>
        <name>NADPH</name>
        <dbReference type="ChEBI" id="CHEBI:57783"/>
    </ligand>
</feature>
<feature type="binding site" evidence="1">
    <location>
        <position position="108"/>
    </location>
    <ligand>
        <name>sn-glycerol 3-phosphate</name>
        <dbReference type="ChEBI" id="CHEBI:57597"/>
    </ligand>
</feature>
<feature type="binding site" evidence="1">
    <location>
        <position position="139"/>
    </location>
    <ligand>
        <name>sn-glycerol 3-phosphate</name>
        <dbReference type="ChEBI" id="CHEBI:57597"/>
    </ligand>
</feature>
<feature type="binding site" evidence="1">
    <location>
        <position position="141"/>
    </location>
    <ligand>
        <name>sn-glycerol 3-phosphate</name>
        <dbReference type="ChEBI" id="CHEBI:57597"/>
    </ligand>
</feature>
<feature type="binding site" evidence="1">
    <location>
        <position position="143"/>
    </location>
    <ligand>
        <name>NADPH</name>
        <dbReference type="ChEBI" id="CHEBI:57783"/>
    </ligand>
</feature>
<feature type="binding site" evidence="1">
    <location>
        <position position="194"/>
    </location>
    <ligand>
        <name>sn-glycerol 3-phosphate</name>
        <dbReference type="ChEBI" id="CHEBI:57597"/>
    </ligand>
</feature>
<feature type="binding site" evidence="1">
    <location>
        <position position="247"/>
    </location>
    <ligand>
        <name>sn-glycerol 3-phosphate</name>
        <dbReference type="ChEBI" id="CHEBI:57597"/>
    </ligand>
</feature>
<feature type="binding site" evidence="1">
    <location>
        <position position="257"/>
    </location>
    <ligand>
        <name>sn-glycerol 3-phosphate</name>
        <dbReference type="ChEBI" id="CHEBI:57597"/>
    </ligand>
</feature>
<feature type="binding site" evidence="1">
    <location>
        <position position="258"/>
    </location>
    <ligand>
        <name>NADPH</name>
        <dbReference type="ChEBI" id="CHEBI:57783"/>
    </ligand>
</feature>
<feature type="binding site" evidence="1">
    <location>
        <position position="258"/>
    </location>
    <ligand>
        <name>sn-glycerol 3-phosphate</name>
        <dbReference type="ChEBI" id="CHEBI:57597"/>
    </ligand>
</feature>
<feature type="binding site" evidence="1">
    <location>
        <position position="259"/>
    </location>
    <ligand>
        <name>sn-glycerol 3-phosphate</name>
        <dbReference type="ChEBI" id="CHEBI:57597"/>
    </ligand>
</feature>
<feature type="binding site" evidence="1">
    <location>
        <position position="282"/>
    </location>
    <ligand>
        <name>NADPH</name>
        <dbReference type="ChEBI" id="CHEBI:57783"/>
    </ligand>
</feature>
<feature type="binding site" evidence="1">
    <location>
        <position position="284"/>
    </location>
    <ligand>
        <name>NADPH</name>
        <dbReference type="ChEBI" id="CHEBI:57783"/>
    </ligand>
</feature>
<sequence>MTKQKVAILGPGSWGTALSQVLNDNGHDVRLWGNIPDQIEEINTKHTNRHYFKDIVLDKNITATLDLGQALSDVDAVLFVVPTKVTRLVARQVAAILDHKVVVMHASKGLEPETHERLSTILEEEIPAHFRSEVVVVSGPSHAEETIVRDITLITAASKDIEAAKYVQSLFSNHYFRLYTNTDVIGVETAGALKNIIAVGAGALHGLGYGDNAKAAVITRGLAEITRLGVKLGADPLTYSGLSGVGDLIVTGTSVHSRNWRAGAALGRGEKLEDIERNMGMVIEGIATTKVAYEIAQDLGVYMPITTAIYKSIYEGADIKESILGMMSNEFRSENEWH</sequence>
<reference key="1">
    <citation type="journal article" date="2006" name="Proc. Natl. Acad. Sci. U.S.A.">
        <title>Molecular genetic anatomy of inter- and intraserotype variation in the human bacterial pathogen group A Streptococcus.</title>
        <authorList>
            <person name="Beres S.B."/>
            <person name="Richter E.W."/>
            <person name="Nagiec M.J."/>
            <person name="Sumby P."/>
            <person name="Porcella S.F."/>
            <person name="DeLeo F.R."/>
            <person name="Musser J.M."/>
        </authorList>
    </citation>
    <scope>NUCLEOTIDE SEQUENCE [LARGE SCALE GENOMIC DNA]</scope>
    <source>
        <strain>MGAS2096</strain>
    </source>
</reference>
<keyword id="KW-0963">Cytoplasm</keyword>
<keyword id="KW-0444">Lipid biosynthesis</keyword>
<keyword id="KW-0443">Lipid metabolism</keyword>
<keyword id="KW-0520">NAD</keyword>
<keyword id="KW-0521">NADP</keyword>
<keyword id="KW-0547">Nucleotide-binding</keyword>
<keyword id="KW-0560">Oxidoreductase</keyword>
<keyword id="KW-0594">Phospholipid biosynthesis</keyword>
<keyword id="KW-1208">Phospholipid metabolism</keyword>
<dbReference type="EC" id="1.1.1.94" evidence="1"/>
<dbReference type="EMBL" id="CP000261">
    <property type="protein sequence ID" value="ABF35258.1"/>
    <property type="molecule type" value="Genomic_DNA"/>
</dbReference>
<dbReference type="SMR" id="Q1JDQ0"/>
<dbReference type="KEGG" id="spj:MGAS2096_Spy0206"/>
<dbReference type="HOGENOM" id="CLU_033449_0_2_9"/>
<dbReference type="UniPathway" id="UPA00940"/>
<dbReference type="GO" id="GO:0005829">
    <property type="term" value="C:cytosol"/>
    <property type="evidence" value="ECO:0007669"/>
    <property type="project" value="TreeGrafter"/>
</dbReference>
<dbReference type="GO" id="GO:0047952">
    <property type="term" value="F:glycerol-3-phosphate dehydrogenase [NAD(P)+] activity"/>
    <property type="evidence" value="ECO:0007669"/>
    <property type="project" value="UniProtKB-UniRule"/>
</dbReference>
<dbReference type="GO" id="GO:0051287">
    <property type="term" value="F:NAD binding"/>
    <property type="evidence" value="ECO:0007669"/>
    <property type="project" value="InterPro"/>
</dbReference>
<dbReference type="GO" id="GO:0005975">
    <property type="term" value="P:carbohydrate metabolic process"/>
    <property type="evidence" value="ECO:0007669"/>
    <property type="project" value="InterPro"/>
</dbReference>
<dbReference type="GO" id="GO:0046167">
    <property type="term" value="P:glycerol-3-phosphate biosynthetic process"/>
    <property type="evidence" value="ECO:0007669"/>
    <property type="project" value="UniProtKB-UniRule"/>
</dbReference>
<dbReference type="GO" id="GO:0046168">
    <property type="term" value="P:glycerol-3-phosphate catabolic process"/>
    <property type="evidence" value="ECO:0007669"/>
    <property type="project" value="InterPro"/>
</dbReference>
<dbReference type="GO" id="GO:0006650">
    <property type="term" value="P:glycerophospholipid metabolic process"/>
    <property type="evidence" value="ECO:0007669"/>
    <property type="project" value="UniProtKB-UniRule"/>
</dbReference>
<dbReference type="GO" id="GO:0008654">
    <property type="term" value="P:phospholipid biosynthetic process"/>
    <property type="evidence" value="ECO:0007669"/>
    <property type="project" value="UniProtKB-KW"/>
</dbReference>
<dbReference type="FunFam" id="1.10.1040.10:FF:000001">
    <property type="entry name" value="Glycerol-3-phosphate dehydrogenase [NAD(P)+]"/>
    <property type="match status" value="1"/>
</dbReference>
<dbReference type="FunFam" id="3.40.50.720:FF:000019">
    <property type="entry name" value="Glycerol-3-phosphate dehydrogenase [NAD(P)+]"/>
    <property type="match status" value="1"/>
</dbReference>
<dbReference type="Gene3D" id="1.10.1040.10">
    <property type="entry name" value="N-(1-d-carboxylethyl)-l-norvaline Dehydrogenase, domain 2"/>
    <property type="match status" value="1"/>
</dbReference>
<dbReference type="Gene3D" id="3.40.50.720">
    <property type="entry name" value="NAD(P)-binding Rossmann-like Domain"/>
    <property type="match status" value="1"/>
</dbReference>
<dbReference type="HAMAP" id="MF_00394">
    <property type="entry name" value="NAD_Glyc3P_dehydrog"/>
    <property type="match status" value="1"/>
</dbReference>
<dbReference type="InterPro" id="IPR008927">
    <property type="entry name" value="6-PGluconate_DH-like_C_sf"/>
</dbReference>
<dbReference type="InterPro" id="IPR013328">
    <property type="entry name" value="6PGD_dom2"/>
</dbReference>
<dbReference type="InterPro" id="IPR006168">
    <property type="entry name" value="G3P_DH_NAD-dep"/>
</dbReference>
<dbReference type="InterPro" id="IPR006109">
    <property type="entry name" value="G3P_DH_NAD-dep_C"/>
</dbReference>
<dbReference type="InterPro" id="IPR011128">
    <property type="entry name" value="G3P_DH_NAD-dep_N"/>
</dbReference>
<dbReference type="InterPro" id="IPR036291">
    <property type="entry name" value="NAD(P)-bd_dom_sf"/>
</dbReference>
<dbReference type="NCBIfam" id="NF000940">
    <property type="entry name" value="PRK00094.1-2"/>
    <property type="match status" value="1"/>
</dbReference>
<dbReference type="NCBIfam" id="NF000941">
    <property type="entry name" value="PRK00094.1-3"/>
    <property type="match status" value="1"/>
</dbReference>
<dbReference type="NCBIfam" id="NF000942">
    <property type="entry name" value="PRK00094.1-4"/>
    <property type="match status" value="1"/>
</dbReference>
<dbReference type="PANTHER" id="PTHR11728">
    <property type="entry name" value="GLYCEROL-3-PHOSPHATE DEHYDROGENASE"/>
    <property type="match status" value="1"/>
</dbReference>
<dbReference type="PANTHER" id="PTHR11728:SF1">
    <property type="entry name" value="GLYCEROL-3-PHOSPHATE DEHYDROGENASE [NAD(+)] 2, CHLOROPLASTIC"/>
    <property type="match status" value="1"/>
</dbReference>
<dbReference type="Pfam" id="PF07479">
    <property type="entry name" value="NAD_Gly3P_dh_C"/>
    <property type="match status" value="1"/>
</dbReference>
<dbReference type="Pfam" id="PF01210">
    <property type="entry name" value="NAD_Gly3P_dh_N"/>
    <property type="match status" value="1"/>
</dbReference>
<dbReference type="PIRSF" id="PIRSF000114">
    <property type="entry name" value="Glycerol-3-P_dh"/>
    <property type="match status" value="1"/>
</dbReference>
<dbReference type="PRINTS" id="PR00077">
    <property type="entry name" value="GPDHDRGNASE"/>
</dbReference>
<dbReference type="SUPFAM" id="SSF48179">
    <property type="entry name" value="6-phosphogluconate dehydrogenase C-terminal domain-like"/>
    <property type="match status" value="1"/>
</dbReference>
<dbReference type="SUPFAM" id="SSF51735">
    <property type="entry name" value="NAD(P)-binding Rossmann-fold domains"/>
    <property type="match status" value="1"/>
</dbReference>
<dbReference type="PROSITE" id="PS00957">
    <property type="entry name" value="NAD_G3PDH"/>
    <property type="match status" value="1"/>
</dbReference>
<protein>
    <recommendedName>
        <fullName evidence="1">Glycerol-3-phosphate dehydrogenase [NAD(P)+]</fullName>
        <ecNumber evidence="1">1.1.1.94</ecNumber>
    </recommendedName>
    <alternativeName>
        <fullName evidence="1">NAD(P)(+)-dependent glycerol-3-phosphate dehydrogenase</fullName>
    </alternativeName>
    <alternativeName>
        <fullName evidence="1">NAD(P)H-dependent dihydroxyacetone-phosphate reductase</fullName>
    </alternativeName>
</protein>
<organism>
    <name type="scientific">Streptococcus pyogenes serotype M12 (strain MGAS2096)</name>
    <dbReference type="NCBI Taxonomy" id="370553"/>
    <lineage>
        <taxon>Bacteria</taxon>
        <taxon>Bacillati</taxon>
        <taxon>Bacillota</taxon>
        <taxon>Bacilli</taxon>
        <taxon>Lactobacillales</taxon>
        <taxon>Streptococcaceae</taxon>
        <taxon>Streptococcus</taxon>
    </lineage>
</organism>
<accession>Q1JDQ0</accession>
<evidence type="ECO:0000255" key="1">
    <source>
        <dbReference type="HAMAP-Rule" id="MF_00394"/>
    </source>
</evidence>